<accession>Q9Y5Y9</accession>
<accession>A6NDQ1</accession>
<protein>
    <recommendedName>
        <fullName>Sodium channel protein type 10 subunit alpha</fullName>
    </recommendedName>
    <alternativeName>
        <fullName>Peripheral nerve sodium channel 3</fullName>
        <shortName>PN3</shortName>
        <shortName>hPN3</shortName>
    </alternativeName>
    <alternativeName>
        <fullName>Sodium channel protein type X subunit alpha</fullName>
    </alternativeName>
    <alternativeName>
        <fullName>Voltage-gated sodium channel subunit alpha Nav1.8</fullName>
    </alternativeName>
</protein>
<comment type="function">
    <text evidence="8 9">Tetrodotoxin-resistant channel that mediates the voltage-dependent sodium ion permeability of excitable membranes. Assuming opened or closed conformations in response to the voltage difference across the membrane, the protein forms a sodium-selective channel through which sodium ions may pass in accordance with their electrochemical gradient. Plays a role in neuropathic pain mechanisms.</text>
</comment>
<comment type="catalytic activity">
    <reaction evidence="8 9">
        <text>Na(+)(in) = Na(+)(out)</text>
        <dbReference type="Rhea" id="RHEA:34963"/>
        <dbReference type="ChEBI" id="CHEBI:29101"/>
    </reaction>
</comment>
<comment type="subunit">
    <text evidence="1">The channel consists of an ion conducting pore forming alpha-subunit regulated by one or more associated auxiliary subunits SCN1B, SCN2B and SCN3B; electrophysiological properties may vary depending on the type of the associated beta subunits. Found in a number of complexes with PRX, DYNLT1 and PDZD2. Interacts with proteins such as FSTL1, PRX, DYNLT1, PDZD2, S100A10 and many others (By similarity). Interacts with NEDD4 and NEDD4L.</text>
</comment>
<comment type="subcellular location">
    <subcellularLocation>
        <location evidence="2">Cell membrane</location>
        <topology evidence="2">Multi-pass membrane protein</topology>
    </subcellularLocation>
    <text evidence="1">It can be translocated to the cell membrane through association with S100A10.</text>
</comment>
<comment type="tissue specificity">
    <text evidence="9">Expressed in the dorsal root ganglia and sciatic nerve.</text>
</comment>
<comment type="domain">
    <text evidence="10">The sequence contains 4 internal repeats, each with 5 hydrophobic segments (S1, S2, S3, S5, S6) and one positively charged segment (S4). Segments S4 are probably the voltage-sensors and are characterized by a series of positively charged amino acids at every third position.</text>
</comment>
<comment type="PTM">
    <text evidence="1">Ubiquitinated by NEDD4L; which promotes its endocytosis.</text>
</comment>
<comment type="PTM">
    <text evidence="1">Phosphorylation at Ser-1451 by PKC in a highly conserved cytoplasmic loop slows inactivation of the sodium channel and reduces peak sodium currents.</text>
</comment>
<comment type="PTM">
    <text evidence="3">Lacks the cysteine which covalently binds the conotoxin GVIIJ. This cysteine (position 816) is speculated in other sodium channel subunits alpha to be implied in covalent binding with the sodium channel subunit beta-2 or beta-4.</text>
</comment>
<comment type="disease" evidence="8">
    <disease id="DI-03973">
        <name>Episodic pain syndrome, familial, 2</name>
        <acronym>FEPS2</acronym>
        <description>An autosomal dominant neurologic disorder characterized by adult-onset of paroxysmal pain mainly affecting the distal lower extremities.</description>
        <dbReference type="MIM" id="615551"/>
    </disease>
    <text>The disease is caused by variants affecting the gene represented in this entry.</text>
</comment>
<comment type="similarity">
    <text evidence="10">Belongs to the sodium channel (TC 1.A.1.10) family. Nav1.8/SCN10A subfamily.</text>
</comment>
<evidence type="ECO:0000250" key="1"/>
<evidence type="ECO:0000250" key="2">
    <source>
        <dbReference type="UniProtKB" id="D0E0C2"/>
    </source>
</evidence>
<evidence type="ECO:0000250" key="3">
    <source>
        <dbReference type="UniProtKB" id="P15389"/>
    </source>
</evidence>
<evidence type="ECO:0000250" key="4">
    <source>
        <dbReference type="UniProtKB" id="Q14524"/>
    </source>
</evidence>
<evidence type="ECO:0000255" key="5"/>
<evidence type="ECO:0000256" key="6">
    <source>
        <dbReference type="SAM" id="MobiDB-lite"/>
    </source>
</evidence>
<evidence type="ECO:0000269" key="7">
    <source>
    </source>
</evidence>
<evidence type="ECO:0000269" key="8">
    <source>
    </source>
</evidence>
<evidence type="ECO:0000269" key="9">
    <source>
    </source>
</evidence>
<evidence type="ECO:0000305" key="10"/>
<evidence type="ECO:0000312" key="11">
    <source>
        <dbReference type="HGNC" id="HGNC:10582"/>
    </source>
</evidence>
<evidence type="ECO:0007829" key="12">
    <source>
        <dbReference type="PDB" id="7WE4"/>
    </source>
</evidence>
<evidence type="ECO:0007829" key="13">
    <source>
        <dbReference type="PDB" id="7WFR"/>
    </source>
</evidence>
<evidence type="ECO:0007829" key="14">
    <source>
        <dbReference type="PDB" id="7WFW"/>
    </source>
</evidence>
<sequence length="1956" mass="220626">MEFPIGSLETNNFRRFTPESLVEIEKQIAAKQGTKKAREKHREQKDQEEKPRPQLDLKACNQLPKFYGELPAELIGEPLEDLDPFYSTHRTFMVLNKGRTISRFSATRALWLFSPFNLIRRTAIKVSVHSWFSLFITVTILVNCVCMTRTDLPEKIEYVFTVIYTFEALIKILARGFCLNEFTYLRDPWNWLDFSVITLAYVGTAIDLRGISGLRTFRVLRALKTVSVIPGLKVIVGALIHSVKKLADVTILTIFCLSVFALVGLQLFKGNLKNKCVKNDMAVNETTNYSSHRKPDIYINKRGTSDPLLCGNGSDSGHCPDGYICLKTSDNPDFNYTSFDSFAWAFLSLFRLMTQDSWERLYQQTLRTSGKIYMIFFVLVIFLGSFYLVNLILAVVTMAYEEQNQATTDEIEAKEKKFQEALEMLRKEQEVLAALGIDTTSLHSHNGSPLTSKNASERRHRIKPRVSEGSTEDNKSPRSDPYNQRRMSFLGLASGKRRASHGSVFHFRSPGRDISLPEGVTDDGVFPGDHESHRGSLLLGGGAGQQGPLPRSPLPQPSNPDSRHGEDEHQPPPTSELAPGAVDVSAFDAGQKKTFLSAEYLDEPFRAQRAMSVVSIITSVLEELEESEQKCPPCLTSLSQKYLIWDCCPMWVKLKTILFGLVTDPFAELTITLCIVVNTIFMAMEHHGMSPTFEAMLQIGNIVFTIFFTAEMVFKIIAFDPYYYFQKKWNIFDCIIVTVSLLELGVAKKGSLSVLRSFRLLRVFKLAKSWPTLNTLIKIIGNSVGALGNLTIILAIIVFVFALVGKQLLGENYRNNRKNISAPHEDWPRWHMHDFFHSFLIVFRILCGEWIENMWACMEVGQKSICLILFLTVMVLGNLVVLNLFIALLLNSFSADNLTAPEDDGEVNNLQVALARIQVFGHRTKQALCSFFSRSCPFPQPKAEPELVVKLPLSSSKAENHIAANTARGSSGGLQAPRGPRDEHSDFIANPTVWVSVPIAEGESDLDDLEDDGGEDAQSFQQEVIPKGQQEQLQQVERCGDHLTPRSPGTGTSSEDLAPSLGETWKDESVPQVPAEGVDDTSSSEGSTVDCLDPEEILRKIPELADDLEEPDDCFTEGCIRHCPCCKLDTTKSPWDVGWQVRKTCYRIVEHSWFESFIIFMILLSSGSLAFEDYYLDQKPTVKALLEYTDRVFTFIFVFEMLLKWVAYGFKKYFTNAWCWLDFLIVNISLISLTAKILEYSEVAPIKALRTLRALRPLRALSRFEGMRVVVDALVGAIPSIMNVLLVCLIFWLIFSIMGVNLFAGKFWRCINYTDGEFSLVPLSIVNNKSDCKIQNSTGSFFWVNVKVNFDNVAMGYLALLQVATFKGWMDIMYAAVDSREVNMQPKWEDNVYMYLYFVIFIIFGGFFTLNLFVGVIIDNFNQQKKKLGGQDIFMTEEQKKYYNAMKKLGSKKPQKPIPRPLNKFQGFVFDIVTRQAFDITIMVLICLNMITMMVETDDQSEEKTKILGKINQFFVAVFTGECVMKMFALRQYYFTNGWNVFDFIVVVLSIASLIFSAILKSLQSYFSPTLFRVIRLARIGRILRLIRAAKGIRTLLFALMMSLPALFNIGLLLFLVMFIYSIFGMSSFPHVRWEAGIDDMFNFQTFANSMLCLFQITTSAGWDGLLSPILNTGPPYCDPNLPNSNGTRGDCGSPAVGIIFFTTYIIISFLIMVNMYIAVILENFNVATEESTEPLSEDDFDMFYETWEKFDPEATQFITFSALSDFADTLSGPLRIPKPNRNILIQMDLPLVPGDKIHCLDILFAFTKNVLGESGELDSLKANMEEKFMATNLSKSSYEPIATTLRWKQEDISATVIQKAYRSYVLHRSMALSNTPCVPRAEEEAASLPDEGFVAFTANENCVLPDKSETASATSFPPSYESVTRGLSDRVNMRTSSSIQNEDEATSMELIAPGP</sequence>
<name>SCNAA_HUMAN</name>
<dbReference type="EMBL" id="AF117907">
    <property type="protein sequence ID" value="AAD30863.1"/>
    <property type="molecule type" value="mRNA"/>
</dbReference>
<dbReference type="EMBL" id="AC116038">
    <property type="status" value="NOT_ANNOTATED_CDS"/>
    <property type="molecule type" value="Genomic_DNA"/>
</dbReference>
<dbReference type="EMBL" id="AC137625">
    <property type="status" value="NOT_ANNOTATED_CDS"/>
    <property type="molecule type" value="Genomic_DNA"/>
</dbReference>
<dbReference type="CCDS" id="CCDS33736.1"/>
<dbReference type="RefSeq" id="NP_001280235.2">
    <property type="nucleotide sequence ID" value="NM_001293306.2"/>
</dbReference>
<dbReference type="RefSeq" id="NP_001280236.2">
    <property type="nucleotide sequence ID" value="NM_001293307.2"/>
</dbReference>
<dbReference type="RefSeq" id="NP_006505.4">
    <property type="nucleotide sequence ID" value="NM_006514.4"/>
</dbReference>
<dbReference type="PDB" id="7WE4">
    <property type="method" value="EM"/>
    <property type="resolution" value="2.70 A"/>
    <property type="chains" value="A=1-1956"/>
</dbReference>
<dbReference type="PDB" id="7WEL">
    <property type="method" value="EM"/>
    <property type="resolution" value="3.20 A"/>
    <property type="chains" value="A=1-1956"/>
</dbReference>
<dbReference type="PDB" id="7WFR">
    <property type="method" value="EM"/>
    <property type="resolution" value="3.00 A"/>
    <property type="chains" value="A=1-1956"/>
</dbReference>
<dbReference type="PDB" id="7WFW">
    <property type="method" value="EM"/>
    <property type="resolution" value="3.10 A"/>
    <property type="chains" value="A=1-1956"/>
</dbReference>
<dbReference type="PDB" id="9DBK">
    <property type="method" value="EM"/>
    <property type="resolution" value="3.12 A"/>
    <property type="chains" value="A=1-1956"/>
</dbReference>
<dbReference type="PDB" id="9DBL">
    <property type="method" value="EM"/>
    <property type="resolution" value="3.24 A"/>
    <property type="chains" value="A=1-1956"/>
</dbReference>
<dbReference type="PDB" id="9DBM">
    <property type="method" value="EM"/>
    <property type="resolution" value="3.22 A"/>
    <property type="chains" value="A=1-1956"/>
</dbReference>
<dbReference type="PDB" id="9DBN">
    <property type="method" value="EM"/>
    <property type="resolution" value="2.76 A"/>
    <property type="chains" value="A=1-1956"/>
</dbReference>
<dbReference type="PDBsum" id="7WE4"/>
<dbReference type="PDBsum" id="7WEL"/>
<dbReference type="PDBsum" id="7WFR"/>
<dbReference type="PDBsum" id="7WFW"/>
<dbReference type="PDBsum" id="9DBK"/>
<dbReference type="PDBsum" id="9DBL"/>
<dbReference type="PDBsum" id="9DBM"/>
<dbReference type="PDBsum" id="9DBN"/>
<dbReference type="EMDB" id="EMD-32439"/>
<dbReference type="EMDB" id="EMD-32451"/>
<dbReference type="EMDB" id="EMD-32475"/>
<dbReference type="EMDB" id="EMD-32476"/>
<dbReference type="EMDB" id="EMD-46718"/>
<dbReference type="EMDB" id="EMD-46719"/>
<dbReference type="EMDB" id="EMD-46720"/>
<dbReference type="EMDB" id="EMD-46721"/>
<dbReference type="SMR" id="Q9Y5Y9"/>
<dbReference type="ComplexPortal" id="CPX-8681">
    <property type="entry name" value="Nav1.8 voltage-gated sodium channel complex, SCN1B-SCN2B variant"/>
</dbReference>
<dbReference type="ComplexPortal" id="CPX-8682">
    <property type="entry name" value="Nav1.8 voltage-gated sodium channel complex, SCN1B-SCN4B variant"/>
</dbReference>
<dbReference type="ComplexPortal" id="CPX-8683">
    <property type="entry name" value="Nav1.8 voltage-gated sodium channel complex, SCN3B-SCN4B variant"/>
</dbReference>
<dbReference type="ComplexPortal" id="CPX-8684">
    <property type="entry name" value="Nav1.8 voltage-gated sodium channel complex, SCN2B-SCN3B variant"/>
</dbReference>
<dbReference type="FunCoup" id="Q9Y5Y9">
    <property type="interactions" value="63"/>
</dbReference>
<dbReference type="IntAct" id="Q9Y5Y9">
    <property type="interactions" value="4"/>
</dbReference>
<dbReference type="STRING" id="9606.ENSP00000390600"/>
<dbReference type="BindingDB" id="Q9Y5Y9"/>
<dbReference type="ChEMBL" id="CHEMBL5451"/>
<dbReference type="DrugBank" id="DB09088">
    <property type="generic name" value="Amylocaine"/>
</dbReference>
<dbReference type="DrugBank" id="DB09009">
    <property type="generic name" value="Articaine"/>
</dbReference>
<dbReference type="DrugBank" id="DB01086">
    <property type="generic name" value="Benzocaine"/>
</dbReference>
<dbReference type="DrugBank" id="DB13746">
    <property type="generic name" value="Bioallethrin"/>
</dbReference>
<dbReference type="DrugBank" id="DB05541">
    <property type="generic name" value="Brivaracetam"/>
</dbReference>
<dbReference type="DrugBank" id="DB00297">
    <property type="generic name" value="Bupivacaine"/>
</dbReference>
<dbReference type="DrugBank" id="DB00564">
    <property type="generic name" value="Carbamazepine"/>
</dbReference>
<dbReference type="DrugBank" id="DB06119">
    <property type="generic name" value="Cenobamate"/>
</dbReference>
<dbReference type="DrugBank" id="DB01161">
    <property type="generic name" value="Chloroprocaine"/>
</dbReference>
<dbReference type="DrugBank" id="DB00527">
    <property type="generic name" value="Cinchocaine"/>
</dbReference>
<dbReference type="DrugBank" id="DB00907">
    <property type="generic name" value="Cocaine"/>
</dbReference>
<dbReference type="DrugBank" id="DB13269">
    <property type="generic name" value="Dichlorobenzyl alcohol"/>
</dbReference>
<dbReference type="DrugBank" id="DB00645">
    <property type="generic name" value="Dyclonine"/>
</dbReference>
<dbReference type="DrugBank" id="DB13961">
    <property type="generic name" value="Fish oil"/>
</dbReference>
<dbReference type="DrugBank" id="DB00473">
    <property type="generic name" value="Hexylcaine"/>
</dbReference>
<dbReference type="DrugBank" id="DB06218">
    <property type="generic name" value="Lacosamide"/>
</dbReference>
<dbReference type="DrugBank" id="DB00555">
    <property type="generic name" value="Lamotrigine"/>
</dbReference>
<dbReference type="DrugBank" id="DB01002">
    <property type="generic name" value="Levobupivacaine"/>
</dbReference>
<dbReference type="DrugBank" id="DB00281">
    <property type="generic name" value="Lidocaine"/>
</dbReference>
<dbReference type="DrugBank" id="DB00961">
    <property type="generic name" value="Mepivacaine"/>
</dbReference>
<dbReference type="DrugBank" id="DB01173">
    <property type="generic name" value="Orphenadrine"/>
</dbReference>
<dbReference type="DrugBank" id="DB00776">
    <property type="generic name" value="Oxcarbazepine"/>
</dbReference>
<dbReference type="DrugBank" id="DB00892">
    <property type="generic name" value="Oxybuprocaine"/>
</dbReference>
<dbReference type="DrugBank" id="DB11186">
    <property type="generic name" value="Pentoxyverine"/>
</dbReference>
<dbReference type="DrugBank" id="DB09345">
    <property type="generic name" value="Pramocaine"/>
</dbReference>
<dbReference type="DrugBank" id="DB00721">
    <property type="generic name" value="Procaine"/>
</dbReference>
<dbReference type="DrugBank" id="DB01069">
    <property type="generic name" value="Promethazine"/>
</dbReference>
<dbReference type="DrugBank" id="DB00807">
    <property type="generic name" value="Proparacaine"/>
</dbReference>
<dbReference type="DrugBank" id="DB09342">
    <property type="generic name" value="Propoxycaine"/>
</dbReference>
<dbReference type="DrugBank" id="DB00243">
    <property type="generic name" value="Ranolazine"/>
</dbReference>
<dbReference type="DrugBank" id="DB08864">
    <property type="generic name" value="Rilpivirine"/>
</dbReference>
<dbReference type="DrugBank" id="DB00296">
    <property type="generic name" value="Ropivacaine"/>
</dbReference>
<dbReference type="DrugBank" id="DB09085">
    <property type="generic name" value="Tetracaine"/>
</dbReference>
<dbReference type="DrugBank" id="DB13025">
    <property type="generic name" value="Tiapride"/>
</dbReference>
<dbReference type="DrugBank" id="DB00273">
    <property type="generic name" value="Topiramate"/>
</dbReference>
<dbReference type="DrugBank" id="DB00313">
    <property type="generic name" value="Valproic acid"/>
</dbReference>
<dbReference type="DrugCentral" id="Q9Y5Y9"/>
<dbReference type="GuidetoPHARMACOLOGY" id="585"/>
<dbReference type="GlyCosmos" id="Q9Y5Y9">
    <property type="glycosylation" value="9 sites, No reported glycans"/>
</dbReference>
<dbReference type="GlyGen" id="Q9Y5Y9">
    <property type="glycosylation" value="10 sites, 1 O-linked glycan (1 site)"/>
</dbReference>
<dbReference type="iPTMnet" id="Q9Y5Y9"/>
<dbReference type="PhosphoSitePlus" id="Q9Y5Y9"/>
<dbReference type="BioMuta" id="SCN10A"/>
<dbReference type="DMDM" id="205371821"/>
<dbReference type="jPOST" id="Q9Y5Y9"/>
<dbReference type="MassIVE" id="Q9Y5Y9"/>
<dbReference type="PaxDb" id="9606-ENSP00000390600"/>
<dbReference type="PeptideAtlas" id="Q9Y5Y9"/>
<dbReference type="ProteomicsDB" id="86545"/>
<dbReference type="ABCD" id="Q9Y5Y9">
    <property type="antibodies" value="1 sequenced antibody"/>
</dbReference>
<dbReference type="Antibodypedia" id="28790">
    <property type="antibodies" value="227 antibodies from 29 providers"/>
</dbReference>
<dbReference type="DNASU" id="6336"/>
<dbReference type="Ensembl" id="ENST00000449082.3">
    <property type="protein sequence ID" value="ENSP00000390600.2"/>
    <property type="gene ID" value="ENSG00000185313.9"/>
</dbReference>
<dbReference type="GeneID" id="6336"/>
<dbReference type="KEGG" id="hsa:6336"/>
<dbReference type="MANE-Select" id="ENST00000449082.3">
    <property type="protein sequence ID" value="ENSP00000390600.2"/>
    <property type="RefSeq nucleotide sequence ID" value="NM_006514.4"/>
    <property type="RefSeq protein sequence ID" value="NP_006505.4"/>
</dbReference>
<dbReference type="UCSC" id="uc003ciq.4">
    <property type="organism name" value="human"/>
</dbReference>
<dbReference type="AGR" id="HGNC:10582"/>
<dbReference type="CTD" id="6336"/>
<dbReference type="DisGeNET" id="6336"/>
<dbReference type="GeneCards" id="SCN10A"/>
<dbReference type="GeneReviews" id="SCN10A"/>
<dbReference type="HGNC" id="HGNC:10582">
    <property type="gene designation" value="SCN10A"/>
</dbReference>
<dbReference type="HPA" id="ENSG00000185313">
    <property type="expression patterns" value="Not detected"/>
</dbReference>
<dbReference type="MalaCards" id="SCN10A"/>
<dbReference type="MIM" id="604427">
    <property type="type" value="gene"/>
</dbReference>
<dbReference type="MIM" id="615551">
    <property type="type" value="phenotype"/>
</dbReference>
<dbReference type="neXtProt" id="NX_Q9Y5Y9"/>
<dbReference type="OpenTargets" id="ENSG00000185313"/>
<dbReference type="Orphanet" id="130">
    <property type="disease" value="Brugada syndrome"/>
</dbReference>
<dbReference type="Orphanet" id="88642">
    <property type="disease" value="Congenital insensitivity to pain-anosmia-neuropathic arthropathy"/>
</dbReference>
<dbReference type="Orphanet" id="306577">
    <property type="disease" value="Hereditary sodium channelopathy-related small fibers neuropathy"/>
</dbReference>
<dbReference type="Orphanet" id="46348">
    <property type="disease" value="Paroxysmal extreme pain disorder"/>
</dbReference>
<dbReference type="Orphanet" id="90026">
    <property type="disease" value="Primary erythromelalgia"/>
</dbReference>
<dbReference type="Orphanet" id="101016">
    <property type="disease" value="Romano-Ward syndrome"/>
</dbReference>
<dbReference type="PharmGKB" id="PA35000"/>
<dbReference type="VEuPathDB" id="HostDB:ENSG00000185313"/>
<dbReference type="eggNOG" id="KOG2301">
    <property type="taxonomic scope" value="Eukaryota"/>
</dbReference>
<dbReference type="GeneTree" id="ENSGT00940000154992"/>
<dbReference type="HOGENOM" id="CLU_000540_5_0_1"/>
<dbReference type="InParanoid" id="Q9Y5Y9"/>
<dbReference type="OMA" id="VERCEDH"/>
<dbReference type="OrthoDB" id="2984333at2759"/>
<dbReference type="PAN-GO" id="Q9Y5Y9">
    <property type="GO annotations" value="5 GO annotations based on evolutionary models"/>
</dbReference>
<dbReference type="PhylomeDB" id="Q9Y5Y9"/>
<dbReference type="TreeFam" id="TF323985"/>
<dbReference type="PathwayCommons" id="Q9Y5Y9"/>
<dbReference type="Reactome" id="R-HSA-445095">
    <property type="pathway name" value="Interaction between L1 and Ankyrins"/>
</dbReference>
<dbReference type="Reactome" id="R-HSA-5576892">
    <property type="pathway name" value="Phase 0 - rapid depolarisation"/>
</dbReference>
<dbReference type="SignaLink" id="Q9Y5Y9"/>
<dbReference type="SIGNOR" id="Q9Y5Y9"/>
<dbReference type="BioGRID-ORCS" id="6336">
    <property type="hits" value="11 hits in 1154 CRISPR screens"/>
</dbReference>
<dbReference type="GeneWiki" id="SCN10A"/>
<dbReference type="GenomeRNAi" id="6336"/>
<dbReference type="Pharos" id="Q9Y5Y9">
    <property type="development level" value="Tclin"/>
</dbReference>
<dbReference type="PRO" id="PR:Q9Y5Y9"/>
<dbReference type="Proteomes" id="UP000005640">
    <property type="component" value="Chromosome 3"/>
</dbReference>
<dbReference type="RNAct" id="Q9Y5Y9">
    <property type="molecule type" value="protein"/>
</dbReference>
<dbReference type="Bgee" id="ENSG00000185313">
    <property type="expression patterns" value="Expressed in pancreatic ductal cell and 18 other cell types or tissues"/>
</dbReference>
<dbReference type="ExpressionAtlas" id="Q9Y5Y9">
    <property type="expression patterns" value="baseline and differential"/>
</dbReference>
<dbReference type="GO" id="GO:0030424">
    <property type="term" value="C:axon"/>
    <property type="evidence" value="ECO:0000250"/>
    <property type="project" value="ARUK-UCL"/>
</dbReference>
<dbReference type="GO" id="GO:0071439">
    <property type="term" value="C:clathrin complex"/>
    <property type="evidence" value="ECO:0007669"/>
    <property type="project" value="Ensembl"/>
</dbReference>
<dbReference type="GO" id="GO:0070062">
    <property type="term" value="C:extracellular exosome"/>
    <property type="evidence" value="ECO:0007005"/>
    <property type="project" value="UniProtKB"/>
</dbReference>
<dbReference type="GO" id="GO:0098978">
    <property type="term" value="C:glutamatergic synapse"/>
    <property type="evidence" value="ECO:0007669"/>
    <property type="project" value="Ensembl"/>
</dbReference>
<dbReference type="GO" id="GO:0005886">
    <property type="term" value="C:plasma membrane"/>
    <property type="evidence" value="ECO:0000314"/>
    <property type="project" value="UniProtKB"/>
</dbReference>
<dbReference type="GO" id="GO:0042734">
    <property type="term" value="C:presynaptic membrane"/>
    <property type="evidence" value="ECO:0007669"/>
    <property type="project" value="Ensembl"/>
</dbReference>
<dbReference type="GO" id="GO:0001518">
    <property type="term" value="C:voltage-gated sodium channel complex"/>
    <property type="evidence" value="ECO:0000314"/>
    <property type="project" value="BHF-UCL"/>
</dbReference>
<dbReference type="GO" id="GO:0044325">
    <property type="term" value="F:transmembrane transporter binding"/>
    <property type="evidence" value="ECO:0000353"/>
    <property type="project" value="BHF-UCL"/>
</dbReference>
<dbReference type="GO" id="GO:0099508">
    <property type="term" value="F:voltage-gated monoatomic ion channel activity involved in regulation of presynaptic membrane potential"/>
    <property type="evidence" value="ECO:0007669"/>
    <property type="project" value="Ensembl"/>
</dbReference>
<dbReference type="GO" id="GO:0005248">
    <property type="term" value="F:voltage-gated sodium channel activity"/>
    <property type="evidence" value="ECO:0000314"/>
    <property type="project" value="BHF-UCL"/>
</dbReference>
<dbReference type="GO" id="GO:0086016">
    <property type="term" value="P:AV node cell action potential"/>
    <property type="evidence" value="ECO:0000315"/>
    <property type="project" value="BHF-UCL"/>
</dbReference>
<dbReference type="GO" id="GO:0086043">
    <property type="term" value="P:bundle of His cell action potential"/>
    <property type="evidence" value="ECO:0000315"/>
    <property type="project" value="BHF-UCL"/>
</dbReference>
<dbReference type="GO" id="GO:0086002">
    <property type="term" value="P:cardiac muscle cell action potential involved in contraction"/>
    <property type="evidence" value="ECO:0000318"/>
    <property type="project" value="GO_Central"/>
</dbReference>
<dbReference type="GO" id="GO:0086010">
    <property type="term" value="P:membrane depolarization during action potential"/>
    <property type="evidence" value="ECO:0000315"/>
    <property type="project" value="UniProtKB"/>
</dbReference>
<dbReference type="GO" id="GO:0042475">
    <property type="term" value="P:odontogenesis of dentin-containing tooth"/>
    <property type="evidence" value="ECO:0007669"/>
    <property type="project" value="Ensembl"/>
</dbReference>
<dbReference type="GO" id="GO:0060371">
    <property type="term" value="P:regulation of atrial cardiac muscle cell membrane depolarization"/>
    <property type="evidence" value="ECO:0000315"/>
    <property type="project" value="BHF-UCL"/>
</dbReference>
<dbReference type="GO" id="GO:0055117">
    <property type="term" value="P:regulation of cardiac muscle contraction"/>
    <property type="evidence" value="ECO:0000315"/>
    <property type="project" value="BHF-UCL"/>
</dbReference>
<dbReference type="GO" id="GO:0002027">
    <property type="term" value="P:regulation of heart rate"/>
    <property type="evidence" value="ECO:0000315"/>
    <property type="project" value="BHF-UCL"/>
</dbReference>
<dbReference type="GO" id="GO:0034765">
    <property type="term" value="P:regulation of monoatomic ion transmembrane transport"/>
    <property type="evidence" value="ECO:0000314"/>
    <property type="project" value="BHF-UCL"/>
</dbReference>
<dbReference type="GO" id="GO:0007600">
    <property type="term" value="P:sensory perception"/>
    <property type="evidence" value="ECO:0000304"/>
    <property type="project" value="ProtInc"/>
</dbReference>
<dbReference type="GO" id="GO:0035725">
    <property type="term" value="P:sodium ion transmembrane transport"/>
    <property type="evidence" value="ECO:0000314"/>
    <property type="project" value="BHF-UCL"/>
</dbReference>
<dbReference type="CDD" id="cd13433">
    <property type="entry name" value="Na_channel_gate"/>
    <property type="match status" value="1"/>
</dbReference>
<dbReference type="FunFam" id="1.10.238.10:FF:000002">
    <property type="entry name" value="Sodium channel protein"/>
    <property type="match status" value="1"/>
</dbReference>
<dbReference type="FunFam" id="1.10.287.70:FF:000001">
    <property type="entry name" value="Sodium channel protein"/>
    <property type="match status" value="1"/>
</dbReference>
<dbReference type="FunFam" id="1.20.120.350:FF:000002">
    <property type="entry name" value="Sodium channel protein"/>
    <property type="match status" value="1"/>
</dbReference>
<dbReference type="FunFam" id="1.20.120.350:FF:000004">
    <property type="entry name" value="Sodium channel protein"/>
    <property type="match status" value="1"/>
</dbReference>
<dbReference type="FunFam" id="1.20.120.350:FF:000049">
    <property type="entry name" value="Sodium channel protein"/>
    <property type="match status" value="1"/>
</dbReference>
<dbReference type="FunFam" id="1.20.5.1190:FF:000007">
    <property type="entry name" value="Sodium channel protein"/>
    <property type="match status" value="1"/>
</dbReference>
<dbReference type="FunFam" id="1.20.120.350:FF:000003">
    <property type="entry name" value="Voltage-dependent sodium channel"/>
    <property type="match status" value="1"/>
</dbReference>
<dbReference type="FunFam" id="1.10.287.70:FF:000049">
    <property type="entry name" value="Voltage-dependent sodium channel 2"/>
    <property type="match status" value="1"/>
</dbReference>
<dbReference type="Gene3D" id="1.10.287.70">
    <property type="match status" value="4"/>
</dbReference>
<dbReference type="Gene3D" id="1.10.238.10">
    <property type="entry name" value="EF-hand"/>
    <property type="match status" value="1"/>
</dbReference>
<dbReference type="Gene3D" id="1.20.5.1190">
    <property type="entry name" value="iswi atpase"/>
    <property type="match status" value="1"/>
</dbReference>
<dbReference type="Gene3D" id="1.20.120.350">
    <property type="entry name" value="Voltage-gated potassium channels. Chain C"/>
    <property type="match status" value="4"/>
</dbReference>
<dbReference type="InterPro" id="IPR005821">
    <property type="entry name" value="Ion_trans_dom"/>
</dbReference>
<dbReference type="InterPro" id="IPR001696">
    <property type="entry name" value="Na_channel_asu"/>
</dbReference>
<dbReference type="InterPro" id="IPR044564">
    <property type="entry name" value="Na_chnl_inactivation_gate"/>
</dbReference>
<dbReference type="InterPro" id="IPR010526">
    <property type="entry name" value="Na_trans_assoc_dom"/>
</dbReference>
<dbReference type="InterPro" id="IPR043203">
    <property type="entry name" value="VGCC_Ca_Na"/>
</dbReference>
<dbReference type="InterPro" id="IPR027359">
    <property type="entry name" value="Volt_channel_dom_sf"/>
</dbReference>
<dbReference type="PANTHER" id="PTHR10037:SF208">
    <property type="entry name" value="SODIUM CHANNEL PROTEIN TYPE 10 SUBUNIT ALPHA"/>
    <property type="match status" value="1"/>
</dbReference>
<dbReference type="PANTHER" id="PTHR10037">
    <property type="entry name" value="VOLTAGE-GATED CATION CHANNEL CALCIUM AND SODIUM"/>
    <property type="match status" value="1"/>
</dbReference>
<dbReference type="Pfam" id="PF00520">
    <property type="entry name" value="Ion_trans"/>
    <property type="match status" value="4"/>
</dbReference>
<dbReference type="Pfam" id="PF24609">
    <property type="entry name" value="IQ_SCN5A_C"/>
    <property type="match status" value="1"/>
</dbReference>
<dbReference type="Pfam" id="PF06512">
    <property type="entry name" value="Na_trans_assoc"/>
    <property type="match status" value="1"/>
</dbReference>
<dbReference type="PRINTS" id="PR00170">
    <property type="entry name" value="NACHANNEL"/>
</dbReference>
<dbReference type="SUPFAM" id="SSF81324">
    <property type="entry name" value="Voltage-gated potassium channels"/>
    <property type="match status" value="4"/>
</dbReference>
<reference key="1">
    <citation type="journal article" date="1998" name="Pain">
        <title>A tetrodotoxin-resistant voltage-gated sodium channel from human dorsal root ganglia, hPN3/SCN10A.</title>
        <authorList>
            <person name="Rabert D.K."/>
            <person name="Koch B.D."/>
            <person name="Ilnicka M."/>
            <person name="Obernolte R.A."/>
            <person name="Naylor S.L."/>
            <person name="Herman R.C."/>
            <person name="Eglen R.M."/>
            <person name="Hunter J.C."/>
            <person name="Sangameswaran L."/>
        </authorList>
    </citation>
    <scope>NUCLEOTIDE SEQUENCE [MRNA]</scope>
    <scope>FUNCTION IN VOLTAGE-EVOKED DEPOLARIZATION</scope>
    <scope>TRANSPORTER ACTIVITY</scope>
    <scope>TISSUE SPECIFICITY</scope>
    <scope>VARIANTS ALA-1073 AND VAL-1713</scope>
    <source>
        <tissue>Spinal ganglion</tissue>
    </source>
</reference>
<reference key="2">
    <citation type="journal article" date="2006" name="Nature">
        <title>The DNA sequence, annotation and analysis of human chromosome 3.</title>
        <authorList>
            <person name="Muzny D.M."/>
            <person name="Scherer S.E."/>
            <person name="Kaul R."/>
            <person name="Wang J."/>
            <person name="Yu J."/>
            <person name="Sudbrak R."/>
            <person name="Buhay C.J."/>
            <person name="Chen R."/>
            <person name="Cree A."/>
            <person name="Ding Y."/>
            <person name="Dugan-Rocha S."/>
            <person name="Gill R."/>
            <person name="Gunaratne P."/>
            <person name="Harris R.A."/>
            <person name="Hawes A.C."/>
            <person name="Hernandez J."/>
            <person name="Hodgson A.V."/>
            <person name="Hume J."/>
            <person name="Jackson A."/>
            <person name="Khan Z.M."/>
            <person name="Kovar-Smith C."/>
            <person name="Lewis L.R."/>
            <person name="Lozado R.J."/>
            <person name="Metzker M.L."/>
            <person name="Milosavljevic A."/>
            <person name="Miner G.R."/>
            <person name="Morgan M.B."/>
            <person name="Nazareth L.V."/>
            <person name="Scott G."/>
            <person name="Sodergren E."/>
            <person name="Song X.-Z."/>
            <person name="Steffen D."/>
            <person name="Wei S."/>
            <person name="Wheeler D.A."/>
            <person name="Wright M.W."/>
            <person name="Worley K.C."/>
            <person name="Yuan Y."/>
            <person name="Zhang Z."/>
            <person name="Adams C.Q."/>
            <person name="Ansari-Lari M.A."/>
            <person name="Ayele M."/>
            <person name="Brown M.J."/>
            <person name="Chen G."/>
            <person name="Chen Z."/>
            <person name="Clendenning J."/>
            <person name="Clerc-Blankenburg K.P."/>
            <person name="Chen R."/>
            <person name="Chen Z."/>
            <person name="Davis C."/>
            <person name="Delgado O."/>
            <person name="Dinh H.H."/>
            <person name="Dong W."/>
            <person name="Draper H."/>
            <person name="Ernst S."/>
            <person name="Fu G."/>
            <person name="Gonzalez-Garay M.L."/>
            <person name="Garcia D.K."/>
            <person name="Gillett W."/>
            <person name="Gu J."/>
            <person name="Hao B."/>
            <person name="Haugen E."/>
            <person name="Havlak P."/>
            <person name="He X."/>
            <person name="Hennig S."/>
            <person name="Hu S."/>
            <person name="Huang W."/>
            <person name="Jackson L.R."/>
            <person name="Jacob L.S."/>
            <person name="Kelly S.H."/>
            <person name="Kube M."/>
            <person name="Levy R."/>
            <person name="Li Z."/>
            <person name="Liu B."/>
            <person name="Liu J."/>
            <person name="Liu W."/>
            <person name="Lu J."/>
            <person name="Maheshwari M."/>
            <person name="Nguyen B.-V."/>
            <person name="Okwuonu G.O."/>
            <person name="Palmeiri A."/>
            <person name="Pasternak S."/>
            <person name="Perez L.M."/>
            <person name="Phelps K.A."/>
            <person name="Plopper F.J."/>
            <person name="Qiang B."/>
            <person name="Raymond C."/>
            <person name="Rodriguez R."/>
            <person name="Saenphimmachak C."/>
            <person name="Santibanez J."/>
            <person name="Shen H."/>
            <person name="Shen Y."/>
            <person name="Subramanian S."/>
            <person name="Tabor P.E."/>
            <person name="Verduzco D."/>
            <person name="Waldron L."/>
            <person name="Wang J."/>
            <person name="Wang J."/>
            <person name="Wang Q."/>
            <person name="Williams G.A."/>
            <person name="Wong G.K.-S."/>
            <person name="Yao Z."/>
            <person name="Zhang J."/>
            <person name="Zhang X."/>
            <person name="Zhao G."/>
            <person name="Zhou J."/>
            <person name="Zhou Y."/>
            <person name="Nelson D."/>
            <person name="Lehrach H."/>
            <person name="Reinhardt R."/>
            <person name="Naylor S.L."/>
            <person name="Yang H."/>
            <person name="Olson M."/>
            <person name="Weinstock G."/>
            <person name="Gibbs R.A."/>
        </authorList>
    </citation>
    <scope>NUCLEOTIDE SEQUENCE [LARGE SCALE GENOMIC DNA]</scope>
</reference>
<reference key="3">
    <citation type="journal article" date="2011" name="Nature">
        <title>Exome sequencing identifies frequent mutation of the SWI/SNF complex gene PBRM1 in renal carcinoma.</title>
        <authorList>
            <person name="Varela I."/>
            <person name="Tarpey P."/>
            <person name="Raine K."/>
            <person name="Huang D."/>
            <person name="Ong C.K."/>
            <person name="Stephens P."/>
            <person name="Davies H."/>
            <person name="Jones D."/>
            <person name="Lin M.L."/>
            <person name="Teague J."/>
            <person name="Bignell G."/>
            <person name="Butler A."/>
            <person name="Cho J."/>
            <person name="Dalgliesh G.L."/>
            <person name="Galappaththige D."/>
            <person name="Greenman C."/>
            <person name="Hardy C."/>
            <person name="Jia M."/>
            <person name="Latimer C."/>
            <person name="Lau K.W."/>
            <person name="Marshall J."/>
            <person name="McLaren S."/>
            <person name="Menzies A."/>
            <person name="Mudie L."/>
            <person name="Stebbings L."/>
            <person name="Largaespada D.A."/>
            <person name="Wessels L.F.A."/>
            <person name="Richard S."/>
            <person name="Kahnoski R.J."/>
            <person name="Anema J."/>
            <person name="Tuveson D.A."/>
            <person name="Perez-Mancera P.A."/>
            <person name="Mustonen V."/>
            <person name="Fischer A."/>
            <person name="Adams D.J."/>
            <person name="Rust A."/>
            <person name="Chan-On W."/>
            <person name="Subimerb C."/>
            <person name="Dykema K."/>
            <person name="Furge K."/>
            <person name="Campbell P.J."/>
            <person name="Teh B.T."/>
            <person name="Stratton M.R."/>
            <person name="Futreal P.A."/>
        </authorList>
    </citation>
    <scope>VARIANT TRP-916</scope>
</reference>
<reference key="4">
    <citation type="journal article" date="2012" name="Proc. Natl. Acad. Sci. U.S.A.">
        <title>Gain-of-function Nav1.8 mutations in painful neuropathy.</title>
        <authorList>
            <person name="Faber C.G."/>
            <person name="Lauria G."/>
            <person name="Merkies I.S."/>
            <person name="Cheng X."/>
            <person name="Han C."/>
            <person name="Ahn H.S."/>
            <person name="Persson A.K."/>
            <person name="Hoeijmakers J.G."/>
            <person name="Gerrits M.M."/>
            <person name="Pierro T."/>
            <person name="Lombardi R."/>
            <person name="Kapetis D."/>
            <person name="Dib-Hajj S.D."/>
            <person name="Waxman S.G."/>
        </authorList>
    </citation>
    <scope>VARIANTS FEPS2 PRO-554 AND THR-1304</scope>
    <scope>CHARACTERIZATION OF VARIANTS FEPS2 PRO-554 AND THR-1304</scope>
    <scope>VARIANTS LEU-939; LEU-940; ASN-1056; TYR-1523 AND SER-1662</scope>
    <scope>CHARACTERIZATION OF VARIANT TYR-1523</scope>
    <scope>FUNCTION</scope>
    <scope>TRANSPORTER ACTIVITY</scope>
</reference>
<keyword id="KW-0002">3D-structure</keyword>
<keyword id="KW-1003">Cell membrane</keyword>
<keyword id="KW-0225">Disease variant</keyword>
<keyword id="KW-1015">Disulfide bond</keyword>
<keyword id="KW-0325">Glycoprotein</keyword>
<keyword id="KW-0407">Ion channel</keyword>
<keyword id="KW-0406">Ion transport</keyword>
<keyword id="KW-0472">Membrane</keyword>
<keyword id="KW-0597">Phosphoprotein</keyword>
<keyword id="KW-1185">Reference proteome</keyword>
<keyword id="KW-0677">Repeat</keyword>
<keyword id="KW-0915">Sodium</keyword>
<keyword id="KW-0894">Sodium channel</keyword>
<keyword id="KW-0739">Sodium transport</keyword>
<keyword id="KW-0812">Transmembrane</keyword>
<keyword id="KW-1133">Transmembrane helix</keyword>
<keyword id="KW-0813">Transport</keyword>
<keyword id="KW-0832">Ubl conjugation</keyword>
<keyword id="KW-0851">Voltage-gated channel</keyword>
<organism>
    <name type="scientific">Homo sapiens</name>
    <name type="common">Human</name>
    <dbReference type="NCBI Taxonomy" id="9606"/>
    <lineage>
        <taxon>Eukaryota</taxon>
        <taxon>Metazoa</taxon>
        <taxon>Chordata</taxon>
        <taxon>Craniata</taxon>
        <taxon>Vertebrata</taxon>
        <taxon>Euteleostomi</taxon>
        <taxon>Mammalia</taxon>
        <taxon>Eutheria</taxon>
        <taxon>Euarchontoglires</taxon>
        <taxon>Primates</taxon>
        <taxon>Haplorrhini</taxon>
        <taxon>Catarrhini</taxon>
        <taxon>Hominidae</taxon>
        <taxon>Homo</taxon>
    </lineage>
</organism>
<feature type="chain" id="PRO_0000048507" description="Sodium channel protein type 10 subunit alpha">
    <location>
        <begin position="1"/>
        <end position="1956"/>
    </location>
</feature>
<feature type="topological domain" description="Cytoplasmic" evidence="10">
    <location>
        <begin position="1"/>
        <end position="125"/>
    </location>
</feature>
<feature type="transmembrane region" description="Helical; Name=S1 of repeat I" evidence="5">
    <location>
        <begin position="126"/>
        <end position="149"/>
    </location>
</feature>
<feature type="topological domain" description="Extracellular" evidence="10">
    <location>
        <begin position="150"/>
        <end position="154"/>
    </location>
</feature>
<feature type="transmembrane region" description="Helical; Name=S2 of repeat I" evidence="5">
    <location>
        <begin position="155"/>
        <end position="174"/>
    </location>
</feature>
<feature type="topological domain" description="Cytoplasmic" evidence="10">
    <location>
        <begin position="175"/>
        <end position="187"/>
    </location>
</feature>
<feature type="transmembrane region" description="Helical; Name=S3 of repeat I" evidence="5">
    <location>
        <begin position="188"/>
        <end position="206"/>
    </location>
</feature>
<feature type="topological domain" description="Extracellular" evidence="10">
    <location>
        <begin position="207"/>
        <end position="212"/>
    </location>
</feature>
<feature type="transmembrane region" description="Helical; Voltage-sensor; Name=S4 of repeat I" evidence="5">
    <location>
        <begin position="213"/>
        <end position="232"/>
    </location>
</feature>
<feature type="topological domain" description="Cytoplasmic" evidence="10">
    <location>
        <begin position="233"/>
        <end position="248"/>
    </location>
</feature>
<feature type="transmembrane region" description="Helical; Name=S5 of repeat I" evidence="5">
    <location>
        <begin position="249"/>
        <end position="272"/>
    </location>
</feature>
<feature type="topological domain" description="Extracellular" evidence="10">
    <location>
        <begin position="273"/>
        <end position="341"/>
    </location>
</feature>
<feature type="intramembrane region" description="Pore-forming" evidence="2">
    <location>
        <begin position="342"/>
        <end position="366"/>
    </location>
</feature>
<feature type="topological domain" description="Extracellular" evidence="10">
    <location>
        <begin position="367"/>
        <end position="373"/>
    </location>
</feature>
<feature type="transmembrane region" description="Helical; Name=S6 of repeat I" evidence="5">
    <location>
        <begin position="374"/>
        <end position="399"/>
    </location>
</feature>
<feature type="topological domain" description="Cytoplasmic" evidence="10">
    <location>
        <begin position="400"/>
        <end position="659"/>
    </location>
</feature>
<feature type="transmembrane region" description="Helical; Name=S1 of repeat II" evidence="5">
    <location>
        <begin position="660"/>
        <end position="684"/>
    </location>
</feature>
<feature type="topological domain" description="Extracellular" evidence="10">
    <location>
        <begin position="685"/>
        <end position="695"/>
    </location>
</feature>
<feature type="transmembrane region" description="Helical; Name=S2 of repeat II" evidence="5">
    <location>
        <begin position="696"/>
        <end position="719"/>
    </location>
</feature>
<feature type="topological domain" description="Cytoplasmic" evidence="10">
    <location>
        <begin position="720"/>
        <end position="727"/>
    </location>
</feature>
<feature type="transmembrane region" description="Helical; Name=S3 of repeat II" evidence="5">
    <location>
        <begin position="728"/>
        <end position="747"/>
    </location>
</feature>
<feature type="topological domain" description="Extracellular" evidence="10">
    <location>
        <begin position="748"/>
        <end position="753"/>
    </location>
</feature>
<feature type="transmembrane region" description="Helical; Voltage-sensor; Name=S4 of repeat II" evidence="5">
    <location>
        <begin position="754"/>
        <end position="773"/>
    </location>
</feature>
<feature type="topological domain" description="Cytoplasmic" evidence="10">
    <location>
        <begin position="774"/>
        <end position="789"/>
    </location>
</feature>
<feature type="transmembrane region" description="Helical; Name=S5 of repeat II" evidence="5">
    <location>
        <begin position="790"/>
        <end position="810"/>
    </location>
</feature>
<feature type="topological domain" description="Extracellular" evidence="10">
    <location>
        <begin position="811"/>
        <end position="834"/>
    </location>
</feature>
<feature type="intramembrane region" description="Pore-forming" evidence="2">
    <location>
        <begin position="835"/>
        <end position="855"/>
    </location>
</feature>
<feature type="topological domain" description="Extracellular" evidence="10">
    <location>
        <begin position="856"/>
        <end position="864"/>
    </location>
</feature>
<feature type="transmembrane region" description="Helical; Name=S6 of repeat II" evidence="5">
    <location>
        <begin position="865"/>
        <end position="890"/>
    </location>
</feature>
<feature type="topological domain" description="Cytoplasmic" evidence="10">
    <location>
        <begin position="891"/>
        <end position="1147"/>
    </location>
</feature>
<feature type="transmembrane region" description="Helical; Name=S1 of repeat III" evidence="5">
    <location>
        <begin position="1148"/>
        <end position="1171"/>
    </location>
</feature>
<feature type="topological domain" description="Extracellular" evidence="10">
    <location>
        <begin position="1172"/>
        <end position="1184"/>
    </location>
</feature>
<feature type="transmembrane region" description="Helical; Name=S2 of repeat III" evidence="5">
    <location>
        <begin position="1185"/>
        <end position="1210"/>
    </location>
</feature>
<feature type="topological domain" description="Cytoplasmic" evidence="10">
    <location>
        <begin position="1211"/>
        <end position="1216"/>
    </location>
</feature>
<feature type="transmembrane region" description="Helical; Name=S3 of repeat III" evidence="5">
    <location>
        <begin position="1217"/>
        <end position="1238"/>
    </location>
</feature>
<feature type="topological domain" description="Extracellular" evidence="10">
    <location>
        <begin position="1239"/>
        <end position="1242"/>
    </location>
</feature>
<feature type="transmembrane region" description="Helical; Voltage-sensor; Name=S4 of repeat III" evidence="5">
    <location>
        <begin position="1243"/>
        <end position="1264"/>
    </location>
</feature>
<feature type="topological domain" description="Cytoplasmic" evidence="10">
    <location>
        <begin position="1265"/>
        <end position="1283"/>
    </location>
</feature>
<feature type="transmembrane region" description="Helical; Name=S5 of repeat III" evidence="5">
    <location>
        <begin position="1284"/>
        <end position="1311"/>
    </location>
</feature>
<feature type="topological domain" description="Extracellular" evidence="10">
    <location>
        <begin position="1312"/>
        <end position="1353"/>
    </location>
</feature>
<feature type="intramembrane region" description="Pore-forming" evidence="2">
    <location>
        <begin position="1354"/>
        <end position="1375"/>
    </location>
</feature>
<feature type="topological domain" description="Extracellular" evidence="10">
    <location>
        <begin position="1376"/>
        <end position="1391"/>
    </location>
</feature>
<feature type="transmembrane region" description="Helical; Name=S6 of repeat III" evidence="5">
    <location>
        <begin position="1392"/>
        <end position="1418"/>
    </location>
</feature>
<feature type="topological domain" description="Cytoplasmic" evidence="10">
    <location>
        <begin position="1419"/>
        <end position="1471"/>
    </location>
</feature>
<feature type="transmembrane region" description="Helical; Name=S1 of repeat IV" evidence="5">
    <location>
        <begin position="1472"/>
        <end position="1495"/>
    </location>
</feature>
<feature type="topological domain" description="Extracellular" evidence="10">
    <location>
        <begin position="1496"/>
        <end position="1506"/>
    </location>
</feature>
<feature type="transmembrane region" description="Helical; Name=S2 of repeat IV" evidence="5">
    <location>
        <begin position="1507"/>
        <end position="1530"/>
    </location>
</feature>
<feature type="topological domain" description="Cytoplasmic" evidence="10">
    <location>
        <begin position="1531"/>
        <end position="1536"/>
    </location>
</feature>
<feature type="transmembrane region" description="Helical; Name=S3 of repeat IV" evidence="5">
    <location>
        <begin position="1537"/>
        <end position="1560"/>
    </location>
</feature>
<feature type="topological domain" description="Extracellular" evidence="10">
    <location>
        <begin position="1561"/>
        <end position="1572"/>
    </location>
</feature>
<feature type="transmembrane region" description="Helical; Voltage-sensor; Name=S4 of repeat IV" evidence="5">
    <location>
        <begin position="1573"/>
        <end position="1594"/>
    </location>
</feature>
<feature type="topological domain" description="Cytoplasmic" evidence="10">
    <location>
        <begin position="1595"/>
        <end position="1609"/>
    </location>
</feature>
<feature type="transmembrane region" description="Helical; Name=S5 of repeat IV" evidence="5">
    <location>
        <begin position="1610"/>
        <end position="1632"/>
    </location>
</feature>
<feature type="topological domain" description="Extracellular" evidence="10">
    <location>
        <begin position="1633"/>
        <end position="1646"/>
    </location>
</feature>
<feature type="intramembrane region" description="Pore-forming" evidence="2">
    <location>
        <begin position="1647"/>
        <end position="1669"/>
    </location>
</feature>
<feature type="topological domain" description="Extracellular" evidence="10">
    <location>
        <begin position="1670"/>
        <end position="1697"/>
    </location>
</feature>
<feature type="transmembrane region" description="Helical; Name=S6 of repeat IV" evidence="5">
    <location>
        <begin position="1698"/>
        <end position="1722"/>
    </location>
</feature>
<feature type="topological domain" description="Cytoplasmic" evidence="10">
    <location>
        <begin position="1723"/>
        <end position="1956"/>
    </location>
</feature>
<feature type="repeat" description="I" evidence="10">
    <location>
        <begin position="116"/>
        <end position="405"/>
    </location>
</feature>
<feature type="repeat" description="II" evidence="10">
    <location>
        <begin position="647"/>
        <end position="911"/>
    </location>
</feature>
<feature type="repeat" description="III" evidence="10">
    <location>
        <begin position="1140"/>
        <end position="1449"/>
    </location>
</feature>
<feature type="repeat" description="IV" evidence="10">
    <location>
        <begin position="1458"/>
        <end position="1757"/>
    </location>
</feature>
<feature type="domain" description="IQ">
    <location>
        <begin position="1851"/>
        <end position="1880"/>
    </location>
</feature>
<feature type="region of interest" description="Disordered" evidence="6">
    <location>
        <begin position="27"/>
        <end position="54"/>
    </location>
</feature>
<feature type="region of interest" description="Disordered" evidence="6">
    <location>
        <begin position="443"/>
        <end position="485"/>
    </location>
</feature>
<feature type="region of interest" description="Disordered" evidence="6">
    <location>
        <begin position="500"/>
        <end position="580"/>
    </location>
</feature>
<feature type="region of interest" description="Disordered" evidence="6">
    <location>
        <begin position="963"/>
        <end position="986"/>
    </location>
</feature>
<feature type="region of interest" description="Disordered" evidence="6">
    <location>
        <begin position="1041"/>
        <end position="1089"/>
    </location>
</feature>
<feature type="region of interest" description="Disordered" evidence="6">
    <location>
        <begin position="1909"/>
        <end position="1956"/>
    </location>
</feature>
<feature type="compositionally biased region" description="Basic and acidic residues" evidence="6">
    <location>
        <begin position="40"/>
        <end position="54"/>
    </location>
</feature>
<feature type="compositionally biased region" description="Polar residues" evidence="6">
    <location>
        <begin position="443"/>
        <end position="454"/>
    </location>
</feature>
<feature type="compositionally biased region" description="Basic and acidic residues" evidence="6">
    <location>
        <begin position="561"/>
        <end position="570"/>
    </location>
</feature>
<feature type="modified residue" description="Phosphoserine" evidence="4">
    <location>
        <position position="441"/>
    </location>
</feature>
<feature type="modified residue" description="Phosphoserine" evidence="4">
    <location>
        <position position="444"/>
    </location>
</feature>
<feature type="modified residue" description="Phosphoserine" evidence="4">
    <location>
        <position position="467"/>
    </location>
</feature>
<feature type="modified residue" description="Phosphoserine" evidence="4">
    <location>
        <position position="479"/>
    </location>
</feature>
<feature type="modified residue" description="Phosphoserine" evidence="4">
    <location>
        <position position="612"/>
    </location>
</feature>
<feature type="modified residue" description="Phosphoserine" evidence="4">
    <location>
        <position position="615"/>
    </location>
</feature>
<feature type="modified residue" description="Phosphoserine; by PKC" evidence="4">
    <location>
        <position position="1451"/>
    </location>
</feature>
<feature type="glycosylation site" description="N-linked (GlcNAc...) asparagine" evidence="5">
    <location>
        <position position="284"/>
    </location>
</feature>
<feature type="glycosylation site" description="N-linked (GlcNAc...) asparagine" evidence="5">
    <location>
        <position position="288"/>
    </location>
</feature>
<feature type="glycosylation site" description="N-linked (GlcNAc...) asparagine" evidence="5">
    <location>
        <position position="312"/>
    </location>
</feature>
<feature type="glycosylation site" description="N-linked (GlcNAc...) asparagine" evidence="5">
    <location>
        <position position="335"/>
    </location>
</feature>
<feature type="glycosylation site" description="N-linked (GlcNAc...) asparagine" evidence="5">
    <location>
        <position position="819"/>
    </location>
</feature>
<feature type="glycosylation site" description="N-linked (GlcNAc...) asparagine" evidence="5">
    <location>
        <position position="1312"/>
    </location>
</feature>
<feature type="glycosylation site" description="N-linked (GlcNAc...) asparagine" evidence="5">
    <location>
        <position position="1328"/>
    </location>
</feature>
<feature type="glycosylation site" description="N-linked (GlcNAc...) asparagine" evidence="5">
    <location>
        <position position="1336"/>
    </location>
</feature>
<feature type="glycosylation site" description="N-linked (GlcNAc...) asparagine" evidence="5">
    <location>
        <position position="1686"/>
    </location>
</feature>
<feature type="disulfide bond" evidence="2">
    <location>
        <begin position="276"/>
        <end position="319"/>
    </location>
</feature>
<feature type="disulfide bond" evidence="2">
    <location>
        <begin position="857"/>
        <end position="866"/>
    </location>
</feature>
<feature type="sequence variant" id="VAR_020605" description="In dbSNP:rs7630989.">
    <original>S</original>
    <variation>P</variation>
    <location>
        <position position="509"/>
    </location>
</feature>
<feature type="sequence variant" id="VAR_070878" description="In FEPS2; increases the excitability of small DRG neurons; dbSNP:rs138404783." evidence="8">
    <original>L</original>
    <variation>P</variation>
    <location>
        <position position="554"/>
    </location>
</feature>
<feature type="sequence variant" id="VAR_048696" description="In dbSNP:rs35332705.">
    <original>G</original>
    <variation>R</variation>
    <location>
        <position position="590"/>
    </location>
</feature>
<feature type="sequence variant" id="VAR_064748" description="Found in a renal cell carcinoma sample; somatic mutation; dbSNP:rs370208223." evidence="7">
    <original>R</original>
    <variation>W</variation>
    <location>
        <position position="916"/>
    </location>
</feature>
<feature type="sequence variant" id="VAR_070879" description="In dbSNP:rs202174472." evidence="8">
    <original>P</original>
    <variation>L</variation>
    <location>
        <position position="939"/>
    </location>
</feature>
<feature type="sequence variant" id="VAR_070880" evidence="8">
    <original>Q</original>
    <variation>L</variation>
    <location>
        <position position="940"/>
    </location>
</feature>
<feature type="sequence variant" id="VAR_070881" description="In dbSNP:rs751574392." evidence="8">
    <original>D</original>
    <variation>N</variation>
    <location>
        <position position="1056"/>
    </location>
</feature>
<feature type="sequence variant" id="VAR_020606" description="In dbSNP:rs6795970." evidence="9">
    <original>V</original>
    <variation>A</variation>
    <location>
        <position position="1073"/>
    </location>
</feature>
<feature type="sequence variant" id="VAR_020607" description="In dbSNP:rs12632942.">
    <original>L</original>
    <variation>P</variation>
    <location>
        <position position="1092"/>
    </location>
</feature>
<feature type="sequence variant" id="VAR_070882" description="In FEPS2; increases the excitability of small DRG neurons; dbSNP:rs142173735." evidence="8">
    <original>A</original>
    <variation>T</variation>
    <location>
        <position position="1304"/>
    </location>
</feature>
<feature type="sequence variant" id="VAR_070883" description="No gain in function in response to depolarization; dbSNP:rs142217269." evidence="8">
    <original>C</original>
    <variation>Y</variation>
    <location>
        <position position="1523"/>
    </location>
</feature>
<feature type="sequence variant" id="VAR_070884" description="In dbSNP:rs151090729." evidence="8">
    <original>G</original>
    <variation>S</variation>
    <location>
        <position position="1662"/>
    </location>
</feature>
<feature type="sequence variant" id="VAR_020608" description="In dbSNP:rs6599241." evidence="9">
    <original>M</original>
    <variation>V</variation>
    <location>
        <position position="1713"/>
    </location>
</feature>
<feature type="helix" evidence="12">
    <location>
        <begin position="119"/>
        <end position="127"/>
    </location>
</feature>
<feature type="helix" evidence="12">
    <location>
        <begin position="130"/>
        <end position="148"/>
    </location>
</feature>
<feature type="strand" evidence="12">
    <location>
        <begin position="149"/>
        <end position="151"/>
    </location>
</feature>
<feature type="turn" evidence="12">
    <location>
        <begin position="154"/>
        <end position="156"/>
    </location>
</feature>
<feature type="helix" evidence="12">
    <location>
        <begin position="157"/>
        <end position="178"/>
    </location>
</feature>
<feature type="helix" evidence="12">
    <location>
        <begin position="181"/>
        <end position="186"/>
    </location>
</feature>
<feature type="helix" evidence="12">
    <location>
        <begin position="188"/>
        <end position="204"/>
    </location>
</feature>
<feature type="helix" evidence="12">
    <location>
        <begin position="213"/>
        <end position="218"/>
    </location>
</feature>
<feature type="helix" evidence="12">
    <location>
        <begin position="220"/>
        <end position="223"/>
    </location>
</feature>
<feature type="helix" evidence="12">
    <location>
        <begin position="225"/>
        <end position="228"/>
    </location>
</feature>
<feature type="helix" evidence="12">
    <location>
        <begin position="232"/>
        <end position="245"/>
    </location>
</feature>
<feature type="helix" evidence="12">
    <location>
        <begin position="247"/>
        <end position="268"/>
    </location>
</feature>
<feature type="turn" evidence="12">
    <location>
        <begin position="269"/>
        <end position="273"/>
    </location>
</feature>
<feature type="strand" evidence="12">
    <location>
        <begin position="274"/>
        <end position="278"/>
    </location>
</feature>
<feature type="strand" evidence="12">
    <location>
        <begin position="291"/>
        <end position="295"/>
    </location>
</feature>
<feature type="strand" evidence="12">
    <location>
        <begin position="304"/>
        <end position="307"/>
    </location>
</feature>
<feature type="turn" evidence="12">
    <location>
        <begin position="314"/>
        <end position="316"/>
    </location>
</feature>
<feature type="strand" evidence="12">
    <location>
        <begin position="323"/>
        <end position="327"/>
    </location>
</feature>
<feature type="turn" evidence="12">
    <location>
        <begin position="332"/>
        <end position="334"/>
    </location>
</feature>
<feature type="strand" evidence="12">
    <location>
        <begin position="339"/>
        <end position="341"/>
    </location>
</feature>
<feature type="helix" evidence="12">
    <location>
        <begin position="342"/>
        <end position="354"/>
    </location>
</feature>
<feature type="helix" evidence="12">
    <location>
        <begin position="358"/>
        <end position="369"/>
    </location>
</feature>
<feature type="helix" evidence="13">
    <location>
        <begin position="371"/>
        <end position="373"/>
    </location>
</feature>
<feature type="helix" evidence="12">
    <location>
        <begin position="374"/>
        <end position="406"/>
    </location>
</feature>
<feature type="helix" evidence="12">
    <location>
        <begin position="652"/>
        <end position="660"/>
    </location>
</feature>
<feature type="helix" evidence="12">
    <location>
        <begin position="665"/>
        <end position="682"/>
    </location>
</feature>
<feature type="helix" evidence="12">
    <location>
        <begin position="691"/>
        <end position="716"/>
    </location>
</feature>
<feature type="helix" evidence="12">
    <location>
        <begin position="721"/>
        <end position="725"/>
    </location>
</feature>
<feature type="helix" evidence="12">
    <location>
        <begin position="728"/>
        <end position="745"/>
    </location>
</feature>
<feature type="turn" evidence="12">
    <location>
        <begin position="749"/>
        <end position="752"/>
    </location>
</feature>
<feature type="helix" evidence="12">
    <location>
        <begin position="753"/>
        <end position="756"/>
    </location>
</feature>
<feature type="helix" evidence="12">
    <location>
        <begin position="758"/>
        <end position="768"/>
    </location>
</feature>
<feature type="helix" evidence="12">
    <location>
        <begin position="771"/>
        <end position="782"/>
    </location>
</feature>
<feature type="turn" evidence="12">
    <location>
        <begin position="783"/>
        <end position="787"/>
    </location>
</feature>
<feature type="helix" evidence="12">
    <location>
        <begin position="788"/>
        <end position="815"/>
    </location>
</feature>
<feature type="helix" evidence="12">
    <location>
        <begin position="817"/>
        <end position="820"/>
    </location>
</feature>
<feature type="helix" evidence="12">
    <location>
        <begin position="835"/>
        <end position="846"/>
    </location>
</feature>
<feature type="helix" evidence="12">
    <location>
        <begin position="851"/>
        <end position="858"/>
    </location>
</feature>
<feature type="helix" evidence="12">
    <location>
        <begin position="863"/>
        <end position="893"/>
    </location>
</feature>
<feature type="helix" evidence="12">
    <location>
        <begin position="1137"/>
        <end position="1149"/>
    </location>
</feature>
<feature type="helix" evidence="12">
    <location>
        <begin position="1152"/>
        <end position="1168"/>
    </location>
</feature>
<feature type="helix" evidence="12">
    <location>
        <begin position="1169"/>
        <end position="1171"/>
    </location>
</feature>
<feature type="helix" evidence="12">
    <location>
        <begin position="1176"/>
        <end position="1178"/>
    </location>
</feature>
<feature type="helix" evidence="12">
    <location>
        <begin position="1180"/>
        <end position="1207"/>
    </location>
</feature>
<feature type="helix" evidence="12">
    <location>
        <begin position="1210"/>
        <end position="1214"/>
    </location>
</feature>
<feature type="strand" evidence="13">
    <location>
        <begin position="1216"/>
        <end position="1218"/>
    </location>
</feature>
<feature type="helix" evidence="12">
    <location>
        <begin position="1220"/>
        <end position="1237"/>
    </location>
</feature>
<feature type="strand" evidence="13">
    <location>
        <begin position="1241"/>
        <end position="1243"/>
    </location>
</feature>
<feature type="helix" evidence="12">
    <location>
        <begin position="1244"/>
        <end position="1250"/>
    </location>
</feature>
<feature type="helix" evidence="12">
    <location>
        <begin position="1251"/>
        <end position="1260"/>
    </location>
</feature>
<feature type="turn" evidence="12">
    <location>
        <begin position="1261"/>
        <end position="1263"/>
    </location>
</feature>
<feature type="helix" evidence="12">
    <location>
        <begin position="1265"/>
        <end position="1303"/>
    </location>
</feature>
<feature type="strand" evidence="12">
    <location>
        <begin position="1308"/>
        <end position="1316"/>
    </location>
</feature>
<feature type="strand" evidence="12">
    <location>
        <begin position="1318"/>
        <end position="1320"/>
    </location>
</feature>
<feature type="turn" evidence="12">
    <location>
        <begin position="1323"/>
        <end position="1325"/>
    </location>
</feature>
<feature type="helix" evidence="12">
    <location>
        <begin position="1329"/>
        <end position="1334"/>
    </location>
</feature>
<feature type="strand" evidence="13">
    <location>
        <begin position="1337"/>
        <end position="1339"/>
    </location>
</feature>
<feature type="strand" evidence="12">
    <location>
        <begin position="1341"/>
        <end position="1345"/>
    </location>
</feature>
<feature type="strand" evidence="13">
    <location>
        <begin position="1350"/>
        <end position="1352"/>
    </location>
</feature>
<feature type="helix" evidence="12">
    <location>
        <begin position="1353"/>
        <end position="1364"/>
    </location>
</feature>
<feature type="helix" evidence="12">
    <location>
        <begin position="1369"/>
        <end position="1376"/>
    </location>
</feature>
<feature type="turn" evidence="12">
    <location>
        <begin position="1388"/>
        <end position="1391"/>
    </location>
</feature>
<feature type="helix" evidence="12">
    <location>
        <begin position="1392"/>
        <end position="1394"/>
    </location>
</feature>
<feature type="helix" evidence="12">
    <location>
        <begin position="1395"/>
        <end position="1404"/>
    </location>
</feature>
<feature type="turn" evidence="12">
    <location>
        <begin position="1405"/>
        <end position="1410"/>
    </location>
</feature>
<feature type="helix" evidence="12">
    <location>
        <begin position="1411"/>
        <end position="1427"/>
    </location>
</feature>
<feature type="helix" evidence="12">
    <location>
        <begin position="1437"/>
        <end position="1451"/>
    </location>
</feature>
<feature type="helix" evidence="12">
    <location>
        <begin position="1464"/>
        <end position="1474"/>
    </location>
</feature>
<feature type="helix" evidence="12">
    <location>
        <begin position="1476"/>
        <end position="1493"/>
    </location>
</feature>
<feature type="helix" evidence="12">
    <location>
        <begin position="1502"/>
        <end position="1529"/>
    </location>
</feature>
<feature type="strand" evidence="12">
    <location>
        <begin position="1530"/>
        <end position="1532"/>
    </location>
</feature>
<feature type="helix" evidence="12">
    <location>
        <begin position="1533"/>
        <end position="1536"/>
    </location>
</feature>
<feature type="helix" evidence="12">
    <location>
        <begin position="1538"/>
        <end position="1560"/>
    </location>
</feature>
<feature type="turn" evidence="14">
    <location>
        <begin position="1561"/>
        <end position="1563"/>
    </location>
</feature>
<feature type="helix" evidence="12">
    <location>
        <begin position="1569"/>
        <end position="1575"/>
    </location>
</feature>
<feature type="helix" evidence="12">
    <location>
        <begin position="1576"/>
        <end position="1579"/>
    </location>
</feature>
<feature type="helix" evidence="12">
    <location>
        <begin position="1580"/>
        <end position="1584"/>
    </location>
</feature>
<feature type="helix" evidence="12">
    <location>
        <begin position="1585"/>
        <end position="1588"/>
    </location>
</feature>
<feature type="helix" evidence="12">
    <location>
        <begin position="1591"/>
        <end position="1628"/>
    </location>
</feature>
<feature type="strand" evidence="12">
    <location>
        <begin position="1629"/>
        <end position="1631"/>
    </location>
</feature>
<feature type="strand" evidence="12">
    <location>
        <begin position="1640"/>
        <end position="1646"/>
    </location>
</feature>
<feature type="helix" evidence="12">
    <location>
        <begin position="1647"/>
        <end position="1658"/>
    </location>
</feature>
<feature type="turn" evidence="12">
    <location>
        <begin position="1659"/>
        <end position="1662"/>
    </location>
</feature>
<feature type="helix" evidence="12">
    <location>
        <begin position="1663"/>
        <end position="1670"/>
    </location>
</feature>
<feature type="turn" evidence="12">
    <location>
        <begin position="1675"/>
        <end position="1677"/>
    </location>
</feature>
<feature type="strand" evidence="13">
    <location>
        <begin position="1686"/>
        <end position="1691"/>
    </location>
</feature>
<feature type="helix" evidence="12">
    <location>
        <begin position="1695"/>
        <end position="1727"/>
    </location>
</feature>
<proteinExistence type="evidence at protein level"/>
<gene>
    <name evidence="11" type="primary">SCN10A</name>
</gene>